<accession>P04807</accession>
<accession>D6VV82</accession>
<accession>Q05838</accession>
<name>HXKB_YEAST</name>
<feature type="initiator methionine" description="Removed" evidence="9">
    <location>
        <position position="1"/>
    </location>
</feature>
<feature type="chain" id="PRO_0000197602" description="Hexokinase-2">
    <location>
        <begin position="2"/>
        <end position="486"/>
    </location>
</feature>
<feature type="domain" description="Hexokinase" evidence="4">
    <location>
        <begin position="21"/>
        <end position="469"/>
    </location>
</feature>
<feature type="region of interest" description="Hexokinase small subdomain" evidence="4">
    <location>
        <begin position="75"/>
        <end position="209"/>
    </location>
</feature>
<feature type="region of interest" description="Hexokinase large subdomain" evidence="4">
    <location>
        <begin position="210"/>
        <end position="458"/>
    </location>
</feature>
<feature type="binding site" evidence="1">
    <location>
        <begin position="86"/>
        <end position="91"/>
    </location>
    <ligand>
        <name>ATP</name>
        <dbReference type="ChEBI" id="CHEBI:30616"/>
    </ligand>
</feature>
<feature type="binding site" evidence="3">
    <location>
        <position position="111"/>
    </location>
    <ligand>
        <name>ATP</name>
        <dbReference type="ChEBI" id="CHEBI:30616"/>
    </ligand>
</feature>
<feature type="binding site" evidence="1">
    <location>
        <position position="158"/>
    </location>
    <ligand>
        <name>substrate</name>
    </ligand>
</feature>
<feature type="binding site" evidence="1">
    <location>
        <begin position="175"/>
        <end position="176"/>
    </location>
    <ligand>
        <name>substrate</name>
    </ligand>
</feature>
<feature type="binding site" evidence="1">
    <location>
        <begin position="210"/>
        <end position="211"/>
    </location>
    <ligand>
        <name>substrate</name>
    </ligand>
</feature>
<feature type="binding site" evidence="1">
    <location>
        <position position="237"/>
    </location>
    <ligand>
        <name>substrate</name>
    </ligand>
</feature>
<feature type="binding site" evidence="1">
    <location>
        <position position="269"/>
    </location>
    <ligand>
        <name>substrate</name>
    </ligand>
</feature>
<feature type="binding site" evidence="1">
    <location>
        <position position="302"/>
    </location>
    <ligand>
        <name>substrate</name>
    </ligand>
</feature>
<feature type="binding site" evidence="1">
    <location>
        <begin position="307"/>
        <end position="308"/>
    </location>
    <ligand>
        <name>ATP</name>
        <dbReference type="ChEBI" id="CHEBI:30616"/>
    </ligand>
</feature>
<feature type="binding site" evidence="1">
    <location>
        <begin position="344"/>
        <end position="348"/>
    </location>
    <ligand>
        <name>ATP</name>
        <dbReference type="ChEBI" id="CHEBI:30616"/>
    </ligand>
</feature>
<feature type="binding site" evidence="1">
    <location>
        <begin position="419"/>
        <end position="423"/>
    </location>
    <ligand>
        <name>ATP</name>
        <dbReference type="ChEBI" id="CHEBI:30616"/>
    </ligand>
</feature>
<feature type="modified residue" description="Phosphoserine" evidence="7 9 13">
    <location>
        <position position="15"/>
    </location>
</feature>
<feature type="modified residue" description="Phosphothreonine" evidence="12">
    <location>
        <position position="38"/>
    </location>
</feature>
<feature type="modified residue" description="Phosphoserine" evidence="8 12">
    <location>
        <position position="158"/>
    </location>
</feature>
<feature type="modified residue" description="Phosphoserine" evidence="13">
    <location>
        <position position="245"/>
    </location>
</feature>
<feature type="modified residue" description="Phosphoserine" evidence="2">
    <location>
        <position position="272"/>
    </location>
</feature>
<feature type="sequence conflict" description="In Ref. 1; CAA27203." evidence="10" ref="1">
    <original>N</original>
    <variation>I</variation>
    <location>
        <position position="29"/>
    </location>
</feature>
<feature type="sequence conflict" description="In Ref. 2; AAA34697/AAA34699." evidence="10" ref="2">
    <original>I</original>
    <variation>N</variation>
    <location>
        <position position="33"/>
    </location>
</feature>
<feature type="sequence conflict" description="In Ref. 1; CAA27203." evidence="10" ref="1">
    <original>G</original>
    <variation>V</variation>
    <location>
        <position position="61"/>
    </location>
</feature>
<feature type="sequence conflict" description="In Ref. 1; CAA27203." evidence="10" ref="1">
    <original>T</original>
    <variation>S</variation>
    <location>
        <position position="197"/>
    </location>
</feature>
<feature type="sequence conflict" description="In Ref. 2; AAA34699." evidence="10" ref="2">
    <original>P</original>
    <variation>H</variation>
    <location>
        <position position="202"/>
    </location>
</feature>
<feature type="sequence conflict" description="In Ref. 2; AAA34697/AAA34699." evidence="10" ref="2">
    <original>YN</original>
    <variation>ST</variation>
    <location>
        <begin position="421"/>
        <end position="422"/>
    </location>
</feature>
<feature type="sequence conflict" description="In Ref. 2; AAA34697/AAA34699." evidence="10" ref="2">
    <original>TS</original>
    <variation>PH</variation>
    <location>
        <begin position="444"/>
        <end position="445"/>
    </location>
</feature>
<feature type="sequence conflict" description="In Ref. 2; AAA34697/AAA34699." evidence="10" ref="2">
    <original>I</original>
    <variation>V</variation>
    <location>
        <position position="453"/>
    </location>
</feature>
<feature type="sequence conflict" description="In Ref. 2; AAA34697/AAA34699." evidence="10" ref="2">
    <original>A</original>
    <variation>P</variation>
    <location>
        <position position="462"/>
    </location>
</feature>
<feature type="helix" evidence="15">
    <location>
        <begin position="27"/>
        <end position="34"/>
    </location>
</feature>
<feature type="helix" evidence="15">
    <location>
        <begin position="38"/>
        <end position="54"/>
    </location>
</feature>
<feature type="strand" evidence="15">
    <location>
        <begin position="58"/>
        <end position="60"/>
    </location>
</feature>
<feature type="strand" evidence="15">
    <location>
        <begin position="80"/>
        <end position="87"/>
    </location>
</feature>
<feature type="strand" evidence="15">
    <location>
        <begin position="89"/>
        <end position="100"/>
    </location>
</feature>
<feature type="strand" evidence="15">
    <location>
        <begin position="104"/>
        <end position="113"/>
    </location>
</feature>
<feature type="turn" evidence="15">
    <location>
        <begin position="116"/>
        <end position="119"/>
    </location>
</feature>
<feature type="helix" evidence="15">
    <location>
        <begin position="125"/>
        <end position="142"/>
    </location>
</feature>
<feature type="strand" evidence="15">
    <location>
        <begin position="151"/>
        <end position="156"/>
    </location>
</feature>
<feature type="strand" evidence="14">
    <location>
        <begin position="159"/>
        <end position="162"/>
    </location>
</feature>
<feature type="helix" evidence="15">
    <location>
        <begin position="189"/>
        <end position="200"/>
    </location>
</feature>
<feature type="strand" evidence="15">
    <location>
        <begin position="203"/>
        <end position="209"/>
    </location>
</feature>
<feature type="helix" evidence="15">
    <location>
        <begin position="211"/>
        <end position="222"/>
    </location>
</feature>
<feature type="strand" evidence="15">
    <location>
        <begin position="226"/>
        <end position="241"/>
    </location>
</feature>
<feature type="helix" evidence="15">
    <location>
        <begin position="246"/>
        <end position="248"/>
    </location>
</feature>
<feature type="strand" evidence="15">
    <location>
        <begin position="256"/>
        <end position="258"/>
    </location>
</feature>
<feature type="strand" evidence="15">
    <location>
        <begin position="264"/>
        <end position="267"/>
    </location>
</feature>
<feature type="turn" evidence="15">
    <location>
        <begin position="271"/>
        <end position="276"/>
    </location>
</feature>
<feature type="strand" evidence="15">
    <location>
        <begin position="278"/>
        <end position="280"/>
    </location>
</feature>
<feature type="helix" evidence="15">
    <location>
        <begin position="284"/>
        <end position="292"/>
    </location>
</feature>
<feature type="strand" evidence="14">
    <location>
        <begin position="293"/>
        <end position="295"/>
    </location>
</feature>
<feature type="helix" evidence="15">
    <location>
        <begin position="300"/>
        <end position="305"/>
    </location>
</feature>
<feature type="helix" evidence="15">
    <location>
        <begin position="307"/>
        <end position="309"/>
    </location>
</feature>
<feature type="helix" evidence="15">
    <location>
        <begin position="310"/>
        <end position="323"/>
    </location>
</feature>
<feature type="strand" evidence="15">
    <location>
        <begin position="326"/>
        <end position="330"/>
    </location>
</feature>
<feature type="turn" evidence="14">
    <location>
        <begin position="334"/>
        <end position="336"/>
    </location>
</feature>
<feature type="helix" evidence="15">
    <location>
        <begin position="345"/>
        <end position="352"/>
    </location>
</feature>
<feature type="strand" evidence="15">
    <location>
        <begin position="355"/>
        <end position="357"/>
    </location>
</feature>
<feature type="helix" evidence="15">
    <location>
        <begin position="359"/>
        <end position="369"/>
    </location>
</feature>
<feature type="helix" evidence="15">
    <location>
        <begin position="375"/>
        <end position="396"/>
    </location>
</feature>
<feature type="helix" evidence="15">
    <location>
        <begin position="398"/>
        <end position="407"/>
    </location>
</feature>
<feature type="strand" evidence="15">
    <location>
        <begin position="410"/>
        <end position="418"/>
    </location>
</feature>
<feature type="turn" evidence="15">
    <location>
        <begin position="419"/>
        <end position="422"/>
    </location>
</feature>
<feature type="helix" evidence="15">
    <location>
        <begin position="427"/>
        <end position="439"/>
    </location>
</feature>
<feature type="helix" evidence="15">
    <location>
        <begin position="446"/>
        <end position="448"/>
    </location>
</feature>
<feature type="strand" evidence="15">
    <location>
        <begin position="449"/>
        <end position="455"/>
    </location>
</feature>
<feature type="turn" evidence="15">
    <location>
        <begin position="459"/>
        <end position="461"/>
    </location>
</feature>
<feature type="helix" evidence="15">
    <location>
        <begin position="462"/>
        <end position="471"/>
    </location>
</feature>
<sequence length="486" mass="53942">MVHLGPKKPQARKGSMADVPKELMQQIENFEKIFTVPTETLQAVTKHFISELEKGLSKKGGNIPMIPGWVMDFPTGKESGDFLAIDLGGTNLRVVLVKLGGDRTFDTTQSKYRLPDAMRTTQNPDELWEFIADSLKAFIDEQFPQGISEPIPLGFTFSFPASQNKINEGILQRWTKGFDIPNIENHDVVPMLQKQITKRNIPIEVVALINDTTGTLVASYYTDPETKMGVIFGTGVNGAYYDVCSDIEKLQGKLSDDIPPSAPMAINCEYGSFDNEHVVLPRTKYDITIDEESPRPGQQTFEKMSSGYYLGEILRLALMDMYKQGFIFKNQDLSKFDKPFVMDTSYPARIEEDPFENLEDTDDLFQNEFGINTTVQERKLIRRLSELIGARAARLSVCGIAAICQKRGYKTGHIAADGSVYNRYPGFKEKAANALKDIYGWTQTSLDDYPIKIVPAEDGSGAGAAVIAALAQKRIAEGKSVGIIGA</sequence>
<comment type="function">
    <text evidence="6">Catalyzes the phosphorylation of hexose, such as D-glucose and D-fructose, to hexose 6-phosphate (D-glucose 6-phosphate and D-fructose 6-phosphate, respectively) (PubMed:332086). Mediates the initial step of glycolysis by catalyzing phosphorylation of D-glucose to D-glucose 6-phosphate (PubMed:332086).</text>
</comment>
<comment type="catalytic activity">
    <reaction evidence="11">
        <text>a D-hexose + ATP = a D-hexose 6-phosphate + ADP + H(+)</text>
        <dbReference type="Rhea" id="RHEA:22740"/>
        <dbReference type="ChEBI" id="CHEBI:4194"/>
        <dbReference type="ChEBI" id="CHEBI:15378"/>
        <dbReference type="ChEBI" id="CHEBI:30616"/>
        <dbReference type="ChEBI" id="CHEBI:229467"/>
        <dbReference type="ChEBI" id="CHEBI:456216"/>
        <dbReference type="EC" id="2.7.1.1"/>
    </reaction>
    <physiologicalReaction direction="left-to-right" evidence="11">
        <dbReference type="Rhea" id="RHEA:22741"/>
    </physiologicalReaction>
</comment>
<comment type="catalytic activity">
    <reaction evidence="11">
        <text>D-fructose + ATP = D-fructose 6-phosphate + ADP + H(+)</text>
        <dbReference type="Rhea" id="RHEA:16125"/>
        <dbReference type="ChEBI" id="CHEBI:15378"/>
        <dbReference type="ChEBI" id="CHEBI:30616"/>
        <dbReference type="ChEBI" id="CHEBI:37721"/>
        <dbReference type="ChEBI" id="CHEBI:61527"/>
        <dbReference type="ChEBI" id="CHEBI:456216"/>
        <dbReference type="EC" id="2.7.1.1"/>
    </reaction>
    <physiologicalReaction direction="left-to-right" evidence="11">
        <dbReference type="Rhea" id="RHEA:16126"/>
    </physiologicalReaction>
</comment>
<comment type="catalytic activity">
    <reaction evidence="11">
        <text>D-glucose + ATP = D-glucose 6-phosphate + ADP + H(+)</text>
        <dbReference type="Rhea" id="RHEA:17825"/>
        <dbReference type="ChEBI" id="CHEBI:4167"/>
        <dbReference type="ChEBI" id="CHEBI:15378"/>
        <dbReference type="ChEBI" id="CHEBI:30616"/>
        <dbReference type="ChEBI" id="CHEBI:61548"/>
        <dbReference type="ChEBI" id="CHEBI:456216"/>
        <dbReference type="EC" id="2.7.1.1"/>
    </reaction>
    <physiologicalReaction direction="left-to-right" evidence="11">
        <dbReference type="Rhea" id="RHEA:17826"/>
    </physiologicalReaction>
</comment>
<comment type="activity regulation">
    <text>Subject to allosteric control. Substrate inhibition by ATP.</text>
</comment>
<comment type="pathway">
    <text evidence="11">Carbohydrate metabolism; hexose metabolism.</text>
</comment>
<comment type="pathway">
    <text evidence="11">Carbohydrate degradation; glycolysis; D-glyceraldehyde 3-phosphate and glycerone phosphate from D-glucose: step 1/4.</text>
</comment>
<comment type="subunit">
    <text>Homodimer.</text>
</comment>
<comment type="interaction">
    <interactant intactId="EBI-8738">
        <id>P04807</id>
    </interactant>
    <interactant intactId="EBI-8732">
        <id>P04806</id>
        <label>HXK1</label>
    </interactant>
    <organismsDiffer>false</organismsDiffer>
    <experiments>3</experiments>
</comment>
<comment type="miscellaneous">
    <text>In yeast there are three glucose-phosphorylating isoenzymes, designated hexokinase I, II and glucokinase.</text>
</comment>
<comment type="miscellaneous">
    <text evidence="5">Present with 114000 molecules/cell in log phase SD medium.</text>
</comment>
<comment type="similarity">
    <text evidence="4 10">Belongs to the hexokinase family.</text>
</comment>
<comment type="online information" name="Worthington enzyme manual">
    <link uri="https://www.worthington-biochem.com/HK/"/>
</comment>
<organism>
    <name type="scientific">Saccharomyces cerevisiae (strain ATCC 204508 / S288c)</name>
    <name type="common">Baker's yeast</name>
    <dbReference type="NCBI Taxonomy" id="559292"/>
    <lineage>
        <taxon>Eukaryota</taxon>
        <taxon>Fungi</taxon>
        <taxon>Dikarya</taxon>
        <taxon>Ascomycota</taxon>
        <taxon>Saccharomycotina</taxon>
        <taxon>Saccharomycetes</taxon>
        <taxon>Saccharomycetales</taxon>
        <taxon>Saccharomycetaceae</taxon>
        <taxon>Saccharomyces</taxon>
    </lineage>
</organism>
<keyword id="KW-0002">3D-structure</keyword>
<keyword id="KW-0021">Allosteric enzyme</keyword>
<keyword id="KW-0067">ATP-binding</keyword>
<keyword id="KW-0903">Direct protein sequencing</keyword>
<keyword id="KW-0324">Glycolysis</keyword>
<keyword id="KW-0418">Kinase</keyword>
<keyword id="KW-0547">Nucleotide-binding</keyword>
<keyword id="KW-0597">Phosphoprotein</keyword>
<keyword id="KW-1185">Reference proteome</keyword>
<keyword id="KW-0808">Transferase</keyword>
<dbReference type="EC" id="2.7.1.1" evidence="11"/>
<dbReference type="EMBL" id="X03483">
    <property type="protein sequence ID" value="CAA27203.1"/>
    <property type="molecule type" value="Genomic_DNA"/>
</dbReference>
<dbReference type="EMBL" id="M11181">
    <property type="protein sequence ID" value="AAA34697.1"/>
    <property type="molecule type" value="Genomic_DNA"/>
</dbReference>
<dbReference type="EMBL" id="M14411">
    <property type="protein sequence ID" value="AAA34699.1"/>
    <property type="molecule type" value="mRNA"/>
</dbReference>
<dbReference type="EMBL" id="X94357">
    <property type="protein sequence ID" value="CAA64134.1"/>
    <property type="molecule type" value="Genomic_DNA"/>
</dbReference>
<dbReference type="EMBL" id="Z72775">
    <property type="protein sequence ID" value="CAA96973.1"/>
    <property type="molecule type" value="Genomic_DNA"/>
</dbReference>
<dbReference type="EMBL" id="X67787">
    <property type="protein sequence ID" value="CAA48003.1"/>
    <property type="molecule type" value="Genomic_DNA"/>
</dbReference>
<dbReference type="EMBL" id="BK006941">
    <property type="protein sequence ID" value="DAA07866.1"/>
    <property type="molecule type" value="Genomic_DNA"/>
</dbReference>
<dbReference type="PIR" id="S61608">
    <property type="entry name" value="KIBYHB"/>
</dbReference>
<dbReference type="RefSeq" id="NP_011261.1">
    <property type="nucleotide sequence ID" value="NM_001181119.1"/>
</dbReference>
<dbReference type="PDB" id="1IG8">
    <property type="method" value="X-ray"/>
    <property type="resolution" value="2.20 A"/>
    <property type="chains" value="A=1-486"/>
</dbReference>
<dbReference type="PDB" id="2YHX">
    <property type="method" value="X-ray"/>
    <property type="resolution" value="2.10 A"/>
    <property type="chains" value="A=152-471"/>
</dbReference>
<dbReference type="PDB" id="5UWT">
    <property type="method" value="X-ray"/>
    <property type="resolution" value="2.34 A"/>
    <property type="chains" value="D=14-36"/>
</dbReference>
<dbReference type="PDBsum" id="1IG8"/>
<dbReference type="PDBsum" id="2YHX"/>
<dbReference type="PDBsum" id="5UWT"/>
<dbReference type="SMR" id="P04807"/>
<dbReference type="BioGRID" id="33026">
    <property type="interactions" value="328"/>
</dbReference>
<dbReference type="DIP" id="DIP-2380N"/>
<dbReference type="FunCoup" id="P04807">
    <property type="interactions" value="703"/>
</dbReference>
<dbReference type="IntAct" id="P04807">
    <property type="interactions" value="31"/>
</dbReference>
<dbReference type="MINT" id="P04807"/>
<dbReference type="STRING" id="4932.YGL253W"/>
<dbReference type="MoonProt" id="P04807"/>
<dbReference type="CarbonylDB" id="P04807"/>
<dbReference type="iPTMnet" id="P04807"/>
<dbReference type="PaxDb" id="4932-YGL253W"/>
<dbReference type="PeptideAtlas" id="P04807"/>
<dbReference type="TopDownProteomics" id="P04807"/>
<dbReference type="EnsemblFungi" id="YGL253W_mRNA">
    <property type="protein sequence ID" value="YGL253W"/>
    <property type="gene ID" value="YGL253W"/>
</dbReference>
<dbReference type="GeneID" id="852639"/>
<dbReference type="KEGG" id="sce:YGL253W"/>
<dbReference type="AGR" id="SGD:S000003222"/>
<dbReference type="SGD" id="S000003222">
    <property type="gene designation" value="HXK2"/>
</dbReference>
<dbReference type="VEuPathDB" id="FungiDB:YGL253W"/>
<dbReference type="eggNOG" id="KOG1369">
    <property type="taxonomic scope" value="Eukaryota"/>
</dbReference>
<dbReference type="GeneTree" id="ENSGT00950000182787"/>
<dbReference type="HOGENOM" id="CLU_014393_5_2_1"/>
<dbReference type="InParanoid" id="P04807"/>
<dbReference type="OMA" id="ADCVQQF"/>
<dbReference type="OrthoDB" id="419537at2759"/>
<dbReference type="BioCyc" id="MetaCyc:YGL253W-MONOMER"/>
<dbReference type="BioCyc" id="YEAST:YGL253W-MONOMER"/>
<dbReference type="BRENDA" id="2.7.1.1">
    <property type="organism ID" value="984"/>
</dbReference>
<dbReference type="Reactome" id="R-SCE-170822">
    <property type="pathway name" value="Regulation of Glucokinase by Glucokinase Regulatory Protein"/>
</dbReference>
<dbReference type="Reactome" id="R-SCE-446205">
    <property type="pathway name" value="Synthesis of GDP-mannose"/>
</dbReference>
<dbReference type="Reactome" id="R-SCE-6798695">
    <property type="pathway name" value="Neutrophil degranulation"/>
</dbReference>
<dbReference type="Reactome" id="R-SCE-70171">
    <property type="pathway name" value="Glycolysis"/>
</dbReference>
<dbReference type="SABIO-RK" id="P04807"/>
<dbReference type="UniPathway" id="UPA00109">
    <property type="reaction ID" value="UER00180"/>
</dbReference>
<dbReference type="UniPathway" id="UPA00242"/>
<dbReference type="BioGRID-ORCS" id="852639">
    <property type="hits" value="1 hit in 10 CRISPR screens"/>
</dbReference>
<dbReference type="EvolutionaryTrace" id="P04807"/>
<dbReference type="PRO" id="PR:P04807"/>
<dbReference type="Proteomes" id="UP000002311">
    <property type="component" value="Chromosome VII"/>
</dbReference>
<dbReference type="RNAct" id="P04807">
    <property type="molecule type" value="protein"/>
</dbReference>
<dbReference type="GO" id="GO:0005829">
    <property type="term" value="C:cytosol"/>
    <property type="evidence" value="ECO:0000314"/>
    <property type="project" value="SGD"/>
</dbReference>
<dbReference type="GO" id="GO:0031966">
    <property type="term" value="C:mitochondrial membrane"/>
    <property type="evidence" value="ECO:0000315"/>
    <property type="project" value="SGD"/>
</dbReference>
<dbReference type="GO" id="GO:0005739">
    <property type="term" value="C:mitochondrion"/>
    <property type="evidence" value="ECO:0000314"/>
    <property type="project" value="SGD"/>
</dbReference>
<dbReference type="GO" id="GO:0005634">
    <property type="term" value="C:nucleus"/>
    <property type="evidence" value="ECO:0000314"/>
    <property type="project" value="SGD"/>
</dbReference>
<dbReference type="GO" id="GO:0005524">
    <property type="term" value="F:ATP binding"/>
    <property type="evidence" value="ECO:0007669"/>
    <property type="project" value="UniProtKB-KW"/>
</dbReference>
<dbReference type="GO" id="GO:0005536">
    <property type="term" value="F:D-glucose binding"/>
    <property type="evidence" value="ECO:0007669"/>
    <property type="project" value="InterPro"/>
</dbReference>
<dbReference type="GO" id="GO:0008865">
    <property type="term" value="F:fructokinase activity"/>
    <property type="evidence" value="ECO:0000318"/>
    <property type="project" value="GO_Central"/>
</dbReference>
<dbReference type="GO" id="GO:0004340">
    <property type="term" value="F:glucokinase activity"/>
    <property type="evidence" value="ECO:0000318"/>
    <property type="project" value="GO_Central"/>
</dbReference>
<dbReference type="GO" id="GO:0004396">
    <property type="term" value="F:hexokinase activity"/>
    <property type="evidence" value="ECO:0000314"/>
    <property type="project" value="SGD"/>
</dbReference>
<dbReference type="GO" id="GO:0019158">
    <property type="term" value="F:mannokinase activity"/>
    <property type="evidence" value="ECO:0000318"/>
    <property type="project" value="GO_Central"/>
</dbReference>
<dbReference type="GO" id="GO:0046323">
    <property type="term" value="P:D-glucose import"/>
    <property type="evidence" value="ECO:0000316"/>
    <property type="project" value="SGD"/>
</dbReference>
<dbReference type="GO" id="GO:1990539">
    <property type="term" value="P:fructose import across plasma membrane"/>
    <property type="evidence" value="ECO:0000316"/>
    <property type="project" value="SGD"/>
</dbReference>
<dbReference type="GO" id="GO:0006000">
    <property type="term" value="P:fructose metabolic process"/>
    <property type="evidence" value="ECO:0000315"/>
    <property type="project" value="SGD"/>
</dbReference>
<dbReference type="GO" id="GO:0051156">
    <property type="term" value="P:glucose 6-phosphate metabolic process"/>
    <property type="evidence" value="ECO:0000318"/>
    <property type="project" value="GO_Central"/>
</dbReference>
<dbReference type="GO" id="GO:0006006">
    <property type="term" value="P:glucose metabolic process"/>
    <property type="evidence" value="ECO:0000315"/>
    <property type="project" value="SGD"/>
</dbReference>
<dbReference type="GO" id="GO:0006096">
    <property type="term" value="P:glycolytic process"/>
    <property type="evidence" value="ECO:0000314"/>
    <property type="project" value="SGD"/>
</dbReference>
<dbReference type="GO" id="GO:0001678">
    <property type="term" value="P:intracellular glucose homeostasis"/>
    <property type="evidence" value="ECO:0000318"/>
    <property type="project" value="GO_Central"/>
</dbReference>
<dbReference type="GO" id="GO:0006013">
    <property type="term" value="P:mannose metabolic process"/>
    <property type="evidence" value="ECO:0000314"/>
    <property type="project" value="SGD"/>
</dbReference>
<dbReference type="GO" id="GO:2001234">
    <property type="term" value="P:negative regulation of apoptotic signaling pathway"/>
    <property type="evidence" value="ECO:0000315"/>
    <property type="project" value="SGD"/>
</dbReference>
<dbReference type="GO" id="GO:0008361">
    <property type="term" value="P:regulation of cell size"/>
    <property type="evidence" value="ECO:0007001"/>
    <property type="project" value="SGD"/>
</dbReference>
<dbReference type="GO" id="GO:0046015">
    <property type="term" value="P:regulation of transcription by glucose"/>
    <property type="evidence" value="ECO:0000314"/>
    <property type="project" value="SGD"/>
</dbReference>
<dbReference type="CDD" id="cd24087">
    <property type="entry name" value="ASKHA_NBD_HK1-2_fungi"/>
    <property type="match status" value="1"/>
</dbReference>
<dbReference type="FunFam" id="1.10.287.1250:FF:000001">
    <property type="entry name" value="Phosphotransferase"/>
    <property type="match status" value="1"/>
</dbReference>
<dbReference type="FunFam" id="3.30.420.40:FF:000092">
    <property type="entry name" value="Phosphotransferase"/>
    <property type="match status" value="1"/>
</dbReference>
<dbReference type="FunFam" id="3.40.367.20:FF:000004">
    <property type="entry name" value="Phosphotransferase"/>
    <property type="match status" value="1"/>
</dbReference>
<dbReference type="Gene3D" id="1.10.287.1250">
    <property type="match status" value="1"/>
</dbReference>
<dbReference type="Gene3D" id="3.30.420.40">
    <property type="match status" value="1"/>
</dbReference>
<dbReference type="Gene3D" id="3.40.367.20">
    <property type="match status" value="1"/>
</dbReference>
<dbReference type="InterPro" id="IPR043129">
    <property type="entry name" value="ATPase_NBD"/>
</dbReference>
<dbReference type="InterPro" id="IPR001312">
    <property type="entry name" value="Hexokinase"/>
</dbReference>
<dbReference type="InterPro" id="IPR019807">
    <property type="entry name" value="Hexokinase_BS"/>
</dbReference>
<dbReference type="InterPro" id="IPR022673">
    <property type="entry name" value="Hexokinase_C"/>
</dbReference>
<dbReference type="InterPro" id="IPR022672">
    <property type="entry name" value="Hexokinase_N"/>
</dbReference>
<dbReference type="PANTHER" id="PTHR19443">
    <property type="entry name" value="HEXOKINASE"/>
    <property type="match status" value="1"/>
</dbReference>
<dbReference type="PANTHER" id="PTHR19443:SF16">
    <property type="entry name" value="HEXOKINASE TYPE 1-RELATED"/>
    <property type="match status" value="1"/>
</dbReference>
<dbReference type="Pfam" id="PF00349">
    <property type="entry name" value="Hexokinase_1"/>
    <property type="match status" value="1"/>
</dbReference>
<dbReference type="Pfam" id="PF03727">
    <property type="entry name" value="Hexokinase_2"/>
    <property type="match status" value="1"/>
</dbReference>
<dbReference type="PRINTS" id="PR00475">
    <property type="entry name" value="HEXOKINASE"/>
</dbReference>
<dbReference type="SUPFAM" id="SSF53067">
    <property type="entry name" value="Actin-like ATPase domain"/>
    <property type="match status" value="2"/>
</dbReference>
<dbReference type="PROSITE" id="PS00378">
    <property type="entry name" value="HEXOKINASE_1"/>
    <property type="match status" value="1"/>
</dbReference>
<dbReference type="PROSITE" id="PS51748">
    <property type="entry name" value="HEXOKINASE_2"/>
    <property type="match status" value="1"/>
</dbReference>
<proteinExistence type="evidence at protein level"/>
<protein>
    <recommendedName>
        <fullName>Hexokinase-2</fullName>
        <ecNumber evidence="11">2.7.1.1</ecNumber>
    </recommendedName>
    <alternativeName>
        <fullName>Hexokinase PII</fullName>
    </alternativeName>
    <alternativeName>
        <fullName>Hexokinase-B</fullName>
    </alternativeName>
</protein>
<gene>
    <name type="primary">HXK2</name>
    <name type="synonym">HEX1</name>
    <name type="synonym">HKB</name>
    <name type="ordered locus">YGL253W</name>
    <name type="ORF">NRB486</name>
</gene>
<evidence type="ECO:0000250" key="1"/>
<evidence type="ECO:0000250" key="2">
    <source>
        <dbReference type="UniProtKB" id="P04806"/>
    </source>
</evidence>
<evidence type="ECO:0000255" key="3"/>
<evidence type="ECO:0000255" key="4">
    <source>
        <dbReference type="PROSITE-ProRule" id="PRU01084"/>
    </source>
</evidence>
<evidence type="ECO:0000269" key="5">
    <source>
    </source>
</evidence>
<evidence type="ECO:0000269" key="6">
    <source>
    </source>
</evidence>
<evidence type="ECO:0000269" key="7">
    <source>
    </source>
</evidence>
<evidence type="ECO:0000269" key="8">
    <source>
    </source>
</evidence>
<evidence type="ECO:0000269" key="9">
    <source>
    </source>
</evidence>
<evidence type="ECO:0000305" key="10"/>
<evidence type="ECO:0000305" key="11">
    <source>
    </source>
</evidence>
<evidence type="ECO:0007744" key="12">
    <source>
    </source>
</evidence>
<evidence type="ECO:0007744" key="13">
    <source>
    </source>
</evidence>
<evidence type="ECO:0007829" key="14">
    <source>
        <dbReference type="PDB" id="1IG8"/>
    </source>
</evidence>
<evidence type="ECO:0007829" key="15">
    <source>
        <dbReference type="PDB" id="2YHX"/>
    </source>
</evidence>
<reference key="1">
    <citation type="journal article" date="1986" name="Nucleic Acids Res.">
        <title>Identification, cloning and sequence determination of the genes specifying hexokinase A and B from yeast.</title>
        <authorList>
            <person name="Stachelek C."/>
            <person name="Stachelek J."/>
            <person name="Swan J."/>
            <person name="Botstein D."/>
            <person name="Konigsberg W."/>
        </authorList>
    </citation>
    <scope>NUCLEOTIDE SEQUENCE [GENOMIC DNA]</scope>
</reference>
<reference key="2">
    <citation type="journal article" date="1985" name="Gene">
        <title>The primary structure of the yeast hexokinase PII gene (HXK2) which is responsible for glucose repression.</title>
        <authorList>
            <person name="Froehlich K.-U."/>
            <person name="Entian K.-D."/>
            <person name="Mecke D."/>
        </authorList>
    </citation>
    <scope>NUCLEOTIDE SEQUENCE [MRNA]</scope>
</reference>
<reference key="3">
    <citation type="journal article" date="1996" name="Yeast">
        <title>Sequence of a 39,411 bp DNA fragment covering the left end of chromosome VII of Saccharomyces cerevisiae.</title>
        <authorList>
            <person name="Coissac E."/>
            <person name="Maillier E."/>
            <person name="Robineau S."/>
            <person name="Netter P."/>
        </authorList>
    </citation>
    <scope>NUCLEOTIDE SEQUENCE [GENOMIC DNA]</scope>
    <source>
        <strain>ATCC 96604 / S288c / FY1679</strain>
    </source>
</reference>
<reference key="4">
    <citation type="journal article" date="1997" name="Nature">
        <title>The nucleotide sequence of Saccharomyces cerevisiae chromosome VII.</title>
        <authorList>
            <person name="Tettelin H."/>
            <person name="Agostoni-Carbone M.L."/>
            <person name="Albermann K."/>
            <person name="Albers M."/>
            <person name="Arroyo J."/>
            <person name="Backes U."/>
            <person name="Barreiros T."/>
            <person name="Bertani I."/>
            <person name="Bjourson A.J."/>
            <person name="Brueckner M."/>
            <person name="Bruschi C.V."/>
            <person name="Carignani G."/>
            <person name="Castagnoli L."/>
            <person name="Cerdan E."/>
            <person name="Clemente M.L."/>
            <person name="Coblenz A."/>
            <person name="Coglievina M."/>
            <person name="Coissac E."/>
            <person name="Defoor E."/>
            <person name="Del Bino S."/>
            <person name="Delius H."/>
            <person name="Delneri D."/>
            <person name="de Wergifosse P."/>
            <person name="Dujon B."/>
            <person name="Durand P."/>
            <person name="Entian K.-D."/>
            <person name="Eraso P."/>
            <person name="Escribano V."/>
            <person name="Fabiani L."/>
            <person name="Fartmann B."/>
            <person name="Feroli F."/>
            <person name="Feuermann M."/>
            <person name="Frontali L."/>
            <person name="Garcia-Gonzalez M."/>
            <person name="Garcia-Saez M.I."/>
            <person name="Goffeau A."/>
            <person name="Guerreiro P."/>
            <person name="Hani J."/>
            <person name="Hansen M."/>
            <person name="Hebling U."/>
            <person name="Hernandez K."/>
            <person name="Heumann K."/>
            <person name="Hilger F."/>
            <person name="Hofmann B."/>
            <person name="Indge K.J."/>
            <person name="James C.M."/>
            <person name="Klima R."/>
            <person name="Koetter P."/>
            <person name="Kramer B."/>
            <person name="Kramer W."/>
            <person name="Lauquin G."/>
            <person name="Leuther H."/>
            <person name="Louis E.J."/>
            <person name="Maillier E."/>
            <person name="Marconi A."/>
            <person name="Martegani E."/>
            <person name="Mazon M.J."/>
            <person name="Mazzoni C."/>
            <person name="McReynolds A.D.K."/>
            <person name="Melchioretto P."/>
            <person name="Mewes H.-W."/>
            <person name="Minenkova O."/>
            <person name="Mueller-Auer S."/>
            <person name="Nawrocki A."/>
            <person name="Netter P."/>
            <person name="Neu R."/>
            <person name="Nombela C."/>
            <person name="Oliver S.G."/>
            <person name="Panzeri L."/>
            <person name="Paoluzi S."/>
            <person name="Plevani P."/>
            <person name="Portetelle D."/>
            <person name="Portillo F."/>
            <person name="Potier S."/>
            <person name="Purnelle B."/>
            <person name="Rieger M."/>
            <person name="Riles L."/>
            <person name="Rinaldi T."/>
            <person name="Robben J."/>
            <person name="Rodrigues-Pousada C."/>
            <person name="Rodriguez-Belmonte E."/>
            <person name="Rodriguez-Torres A.M."/>
            <person name="Rose M."/>
            <person name="Ruzzi M."/>
            <person name="Saliola M."/>
            <person name="Sanchez-Perez M."/>
            <person name="Schaefer B."/>
            <person name="Schaefer M."/>
            <person name="Scharfe M."/>
            <person name="Schmidheini T."/>
            <person name="Schreer A."/>
            <person name="Skala J."/>
            <person name="Souciet J.-L."/>
            <person name="Steensma H.Y."/>
            <person name="Talla E."/>
            <person name="Thierry A."/>
            <person name="Vandenbol M."/>
            <person name="van der Aart Q.J.M."/>
            <person name="Van Dyck L."/>
            <person name="Vanoni M."/>
            <person name="Verhasselt P."/>
            <person name="Voet M."/>
            <person name="Volckaert G."/>
            <person name="Wambutt R."/>
            <person name="Watson M.D."/>
            <person name="Weber N."/>
            <person name="Wedler E."/>
            <person name="Wedler H."/>
            <person name="Wipfli P."/>
            <person name="Wolf K."/>
            <person name="Wright L.F."/>
            <person name="Zaccaria P."/>
            <person name="Zimmermann M."/>
            <person name="Zollner A."/>
            <person name="Kleine K."/>
        </authorList>
    </citation>
    <scope>NUCLEOTIDE SEQUENCE [LARGE SCALE GENOMIC DNA]</scope>
    <source>
        <strain>ATCC 204508 / S288c</strain>
    </source>
</reference>
<reference key="5">
    <citation type="journal article" date="2014" name="G3 (Bethesda)">
        <title>The reference genome sequence of Saccharomyces cerevisiae: Then and now.</title>
        <authorList>
            <person name="Engel S.R."/>
            <person name="Dietrich F.S."/>
            <person name="Fisk D.G."/>
            <person name="Binkley G."/>
            <person name="Balakrishnan R."/>
            <person name="Costanzo M.C."/>
            <person name="Dwight S.S."/>
            <person name="Hitz B.C."/>
            <person name="Karra K."/>
            <person name="Nash R.S."/>
            <person name="Weng S."/>
            <person name="Wong E.D."/>
            <person name="Lloyd P."/>
            <person name="Skrzypek M.S."/>
            <person name="Miyasato S.R."/>
            <person name="Simison M."/>
            <person name="Cherry J.M."/>
        </authorList>
    </citation>
    <scope>GENOME REANNOTATION</scope>
    <source>
        <strain>ATCC 204508 / S288c</strain>
    </source>
</reference>
<reference key="6">
    <citation type="journal article" date="1993" name="Yeast">
        <title>Identification of a gene encoding a novel zinc finger protein in Saccharomyces cerevisiae.</title>
        <authorList>
            <person name="Breitwieser W."/>
            <person name="Price C."/>
            <person name="Schuster T."/>
        </authorList>
    </citation>
    <scope>NUCLEOTIDE SEQUENCE OF 1-247</scope>
    <source>
        <strain>ATCC 200060 / W303</strain>
    </source>
</reference>
<reference key="7">
    <citation type="journal article" date="1995" name="Electrophoresis">
        <title>Gene linkage of two-dimensional polyacrylamide gel electrophoresis resolved proteins from isogene families in Saccharomyces cerevisiae by microsequencing of in-gel trypsin generated peptides.</title>
        <authorList>
            <person name="Norbeck J."/>
            <person name="Blomberg A."/>
        </authorList>
    </citation>
    <scope>PROTEIN SEQUENCE OF 119-127; 176-185 AND 304-314</scope>
    <source>
        <strain>ATCC 38531 / Y41</strain>
    </source>
</reference>
<reference key="8">
    <citation type="journal article" date="1977" name="Arch. Biochem. Biophys.">
        <title>Physiological role of glucose-phosphorylating enzymes in Saccharomyces cerevisiae.</title>
        <authorList>
            <person name="Lobo Z."/>
            <person name="Maitra P.K."/>
        </authorList>
    </citation>
    <scope>FUNCTION</scope>
    <scope>CATALYTIC ACTIVITY</scope>
</reference>
<reference key="9">
    <citation type="journal article" date="1994" name="Biochemistry">
        <title>In vivo phosphorylation site of hexokinase 2 in Saccharomyces cerevisiae.</title>
        <authorList>
            <person name="Kriegel T.M."/>
            <person name="Rush J."/>
            <person name="Vojtek A.B."/>
            <person name="Clifton D."/>
            <person name="Fraenkel D.G."/>
        </authorList>
    </citation>
    <scope>PHOSPHORYLATION AT SER-15</scope>
</reference>
<reference key="10">
    <citation type="journal article" date="1997" name="Biochemistry">
        <title>Autophosphorylation-inactivation site of hexokinase 2 in Saccharomyces cerevisiae.</title>
        <authorList>
            <person name="Heidrich K."/>
            <person name="Otto A."/>
            <person name="Behlke J."/>
            <person name="Rush J."/>
            <person name="Wenzel K.W."/>
            <person name="Kriegel T."/>
        </authorList>
    </citation>
    <scope>PHOSPHORYLATION AT SER-158</scope>
</reference>
<reference key="11">
    <citation type="journal article" date="1998" name="Biochemistry">
        <title>Hexokinase 2 from Saccharomyces cerevisiae: regulation of oligomeric structure by in vivo phosphorylation at serine-14.</title>
        <authorList>
            <person name="Behlke J."/>
            <person name="Heidrich K."/>
            <person name="Naumann M."/>
            <person name="Mueller E.-C."/>
            <person name="Otto A."/>
            <person name="Reuter R."/>
            <person name="Kriegel T."/>
        </authorList>
    </citation>
    <scope>PROTEIN SEQUENCE OF 2-19</scope>
    <scope>PHOSPHORYLATION AT SER-15</scope>
</reference>
<reference key="12">
    <citation type="journal article" date="2003" name="Nature">
        <title>Global analysis of protein expression in yeast.</title>
        <authorList>
            <person name="Ghaemmaghami S."/>
            <person name="Huh W.-K."/>
            <person name="Bower K."/>
            <person name="Howson R.W."/>
            <person name="Belle A."/>
            <person name="Dephoure N."/>
            <person name="O'Shea E.K."/>
            <person name="Weissman J.S."/>
        </authorList>
    </citation>
    <scope>LEVEL OF PROTEIN EXPRESSION [LARGE SCALE ANALYSIS]</scope>
</reference>
<reference key="13">
    <citation type="journal article" date="2008" name="Mol. Cell. Proteomics">
        <title>A multidimensional chromatography technology for in-depth phosphoproteome analysis.</title>
        <authorList>
            <person name="Albuquerque C.P."/>
            <person name="Smolka M.B."/>
            <person name="Payne S.H."/>
            <person name="Bafna V."/>
            <person name="Eng J."/>
            <person name="Zhou H."/>
        </authorList>
    </citation>
    <scope>PHOSPHORYLATION [LARGE SCALE ANALYSIS] AT THR-38 AND SER-158</scope>
    <scope>IDENTIFICATION BY MASS SPECTROMETRY [LARGE SCALE ANALYSIS]</scope>
</reference>
<reference key="14">
    <citation type="journal article" date="2009" name="Science">
        <title>Global analysis of Cdk1 substrate phosphorylation sites provides insights into evolution.</title>
        <authorList>
            <person name="Holt L.J."/>
            <person name="Tuch B.B."/>
            <person name="Villen J."/>
            <person name="Johnson A.D."/>
            <person name="Gygi S.P."/>
            <person name="Morgan D.O."/>
        </authorList>
    </citation>
    <scope>PHOSPHORYLATION [LARGE SCALE ANALYSIS] AT SER-15 AND SER-245</scope>
    <scope>IDENTIFICATION BY MASS SPECTROMETRY [LARGE SCALE ANALYSIS]</scope>
</reference>
<reference key="15">
    <citation type="journal article" date="1978" name="J. Mol. Biol.">
        <title>Sequencing a protein by X-ray crystallography. II. Refinement of yeast hexokinase B co-ordinates and sequence at 2.1-A resolution.</title>
        <authorList>
            <person name="Anderson C.M."/>
            <person name="Stenkamp R.E."/>
            <person name="Steitz T.A."/>
        </authorList>
    </citation>
    <scope>X-RAY CRYSTALLOGRAPHY (2.1 ANGSTROMS)</scope>
</reference>